<feature type="chain" id="PRO_1000199971" description="Endoribonuclease YbeY">
    <location>
        <begin position="1"/>
        <end position="155"/>
    </location>
</feature>
<feature type="binding site" evidence="1">
    <location>
        <position position="114"/>
    </location>
    <ligand>
        <name>Zn(2+)</name>
        <dbReference type="ChEBI" id="CHEBI:29105"/>
        <note>catalytic</note>
    </ligand>
</feature>
<feature type="binding site" evidence="1">
    <location>
        <position position="118"/>
    </location>
    <ligand>
        <name>Zn(2+)</name>
        <dbReference type="ChEBI" id="CHEBI:29105"/>
        <note>catalytic</note>
    </ligand>
</feature>
<feature type="binding site" evidence="1">
    <location>
        <position position="124"/>
    </location>
    <ligand>
        <name>Zn(2+)</name>
        <dbReference type="ChEBI" id="CHEBI:29105"/>
        <note>catalytic</note>
    </ligand>
</feature>
<organism>
    <name type="scientific">Escherichia coli (strain SMS-3-5 / SECEC)</name>
    <dbReference type="NCBI Taxonomy" id="439855"/>
    <lineage>
        <taxon>Bacteria</taxon>
        <taxon>Pseudomonadati</taxon>
        <taxon>Pseudomonadota</taxon>
        <taxon>Gammaproteobacteria</taxon>
        <taxon>Enterobacterales</taxon>
        <taxon>Enterobacteriaceae</taxon>
        <taxon>Escherichia</taxon>
    </lineage>
</organism>
<gene>
    <name evidence="1" type="primary">ybeY</name>
    <name type="ordered locus">EcSMS35_0681</name>
</gene>
<accession>B1LLB0</accession>
<sequence length="155" mass="17526">MSQVILDLQLACEDNSGLPEESQFQTWLNAVIPQFQEESEVTIRVVDTAESHSLNLTYRGKDKPTNVLSFPFEVPPGMEMSLLGDLVICRQVVEKEAQEQGKPLEAHWAHMVVHGSLHLLGYDHIEDDEAEEMEAIETEIMLALGYEDPYIAEKE</sequence>
<evidence type="ECO:0000255" key="1">
    <source>
        <dbReference type="HAMAP-Rule" id="MF_00009"/>
    </source>
</evidence>
<comment type="function">
    <text evidence="1">Single strand-specific metallo-endoribonuclease involved in late-stage 70S ribosome quality control and in maturation of the 3' terminus of the 16S rRNA.</text>
</comment>
<comment type="cofactor">
    <cofactor evidence="1">
        <name>Zn(2+)</name>
        <dbReference type="ChEBI" id="CHEBI:29105"/>
    </cofactor>
    <text evidence="1">Binds 1 zinc ion.</text>
</comment>
<comment type="subcellular location">
    <subcellularLocation>
        <location evidence="1">Cytoplasm</location>
    </subcellularLocation>
</comment>
<comment type="similarity">
    <text evidence="1">Belongs to the endoribonuclease YbeY family.</text>
</comment>
<proteinExistence type="inferred from homology"/>
<name>YBEY_ECOSM</name>
<protein>
    <recommendedName>
        <fullName evidence="1">Endoribonuclease YbeY</fullName>
        <ecNumber evidence="1">3.1.-.-</ecNumber>
    </recommendedName>
</protein>
<reference key="1">
    <citation type="journal article" date="2008" name="J. Bacteriol.">
        <title>Insights into the environmental resistance gene pool from the genome sequence of the multidrug-resistant environmental isolate Escherichia coli SMS-3-5.</title>
        <authorList>
            <person name="Fricke W.F."/>
            <person name="Wright M.S."/>
            <person name="Lindell A.H."/>
            <person name="Harkins D.M."/>
            <person name="Baker-Austin C."/>
            <person name="Ravel J."/>
            <person name="Stepanauskas R."/>
        </authorList>
    </citation>
    <scope>NUCLEOTIDE SEQUENCE [LARGE SCALE GENOMIC DNA]</scope>
    <source>
        <strain>SMS-3-5 / SECEC</strain>
    </source>
</reference>
<dbReference type="EC" id="3.1.-.-" evidence="1"/>
<dbReference type="EMBL" id="CP000970">
    <property type="protein sequence ID" value="ACB16994.1"/>
    <property type="molecule type" value="Genomic_DNA"/>
</dbReference>
<dbReference type="RefSeq" id="WP_000084467.1">
    <property type="nucleotide sequence ID" value="NC_010498.1"/>
</dbReference>
<dbReference type="SMR" id="B1LLB0"/>
<dbReference type="KEGG" id="ecm:EcSMS35_0681"/>
<dbReference type="HOGENOM" id="CLU_106710_0_1_6"/>
<dbReference type="Proteomes" id="UP000007011">
    <property type="component" value="Chromosome"/>
</dbReference>
<dbReference type="GO" id="GO:0005737">
    <property type="term" value="C:cytoplasm"/>
    <property type="evidence" value="ECO:0007669"/>
    <property type="project" value="UniProtKB-SubCell"/>
</dbReference>
<dbReference type="GO" id="GO:0004222">
    <property type="term" value="F:metalloendopeptidase activity"/>
    <property type="evidence" value="ECO:0007669"/>
    <property type="project" value="InterPro"/>
</dbReference>
<dbReference type="GO" id="GO:0004521">
    <property type="term" value="F:RNA endonuclease activity"/>
    <property type="evidence" value="ECO:0007669"/>
    <property type="project" value="UniProtKB-UniRule"/>
</dbReference>
<dbReference type="GO" id="GO:0008270">
    <property type="term" value="F:zinc ion binding"/>
    <property type="evidence" value="ECO:0007669"/>
    <property type="project" value="UniProtKB-UniRule"/>
</dbReference>
<dbReference type="GO" id="GO:0006364">
    <property type="term" value="P:rRNA processing"/>
    <property type="evidence" value="ECO:0007669"/>
    <property type="project" value="UniProtKB-UniRule"/>
</dbReference>
<dbReference type="FunFam" id="3.40.390.30:FF:000001">
    <property type="entry name" value="Endoribonuclease YbeY"/>
    <property type="match status" value="1"/>
</dbReference>
<dbReference type="Gene3D" id="3.40.390.30">
    <property type="entry name" value="Metalloproteases ('zincins'), catalytic domain"/>
    <property type="match status" value="1"/>
</dbReference>
<dbReference type="HAMAP" id="MF_00009">
    <property type="entry name" value="Endoribonucl_YbeY"/>
    <property type="match status" value="1"/>
</dbReference>
<dbReference type="InterPro" id="IPR023091">
    <property type="entry name" value="MetalPrtase_cat_dom_sf_prd"/>
</dbReference>
<dbReference type="InterPro" id="IPR002036">
    <property type="entry name" value="YbeY"/>
</dbReference>
<dbReference type="InterPro" id="IPR020549">
    <property type="entry name" value="YbeY_CS"/>
</dbReference>
<dbReference type="NCBIfam" id="TIGR00043">
    <property type="entry name" value="rRNA maturation RNase YbeY"/>
    <property type="match status" value="1"/>
</dbReference>
<dbReference type="PANTHER" id="PTHR46986">
    <property type="entry name" value="ENDORIBONUCLEASE YBEY, CHLOROPLASTIC"/>
    <property type="match status" value="1"/>
</dbReference>
<dbReference type="PANTHER" id="PTHR46986:SF1">
    <property type="entry name" value="ENDORIBONUCLEASE YBEY, CHLOROPLASTIC"/>
    <property type="match status" value="1"/>
</dbReference>
<dbReference type="Pfam" id="PF02130">
    <property type="entry name" value="YbeY"/>
    <property type="match status" value="1"/>
</dbReference>
<dbReference type="SUPFAM" id="SSF55486">
    <property type="entry name" value="Metalloproteases ('zincins'), catalytic domain"/>
    <property type="match status" value="1"/>
</dbReference>
<dbReference type="PROSITE" id="PS01306">
    <property type="entry name" value="UPF0054"/>
    <property type="match status" value="1"/>
</dbReference>
<keyword id="KW-0963">Cytoplasm</keyword>
<keyword id="KW-0255">Endonuclease</keyword>
<keyword id="KW-0378">Hydrolase</keyword>
<keyword id="KW-0479">Metal-binding</keyword>
<keyword id="KW-0540">Nuclease</keyword>
<keyword id="KW-0690">Ribosome biogenesis</keyword>
<keyword id="KW-0698">rRNA processing</keyword>
<keyword id="KW-0862">Zinc</keyword>